<protein>
    <recommendedName>
        <fullName>WRKY transcription factor 71</fullName>
    </recommendedName>
    <alternativeName>
        <fullName>WRKY DNA-binding protein 71</fullName>
    </alternativeName>
</protein>
<name>WRK71_ARATH</name>
<keyword id="KW-0238">DNA-binding</keyword>
<keyword id="KW-0539">Nucleus</keyword>
<keyword id="KW-1185">Reference proteome</keyword>
<keyword id="KW-0804">Transcription</keyword>
<keyword id="KW-0805">Transcription regulation</keyword>
<accession>Q93WV4</accession>
<accession>Q9FXG1</accession>
<evidence type="ECO:0000250" key="1"/>
<evidence type="ECO:0000255" key="2">
    <source>
        <dbReference type="PROSITE-ProRule" id="PRU00223"/>
    </source>
</evidence>
<evidence type="ECO:0000256" key="3">
    <source>
        <dbReference type="SAM" id="MobiDB-lite"/>
    </source>
</evidence>
<evidence type="ECO:0000305" key="4"/>
<gene>
    <name type="primary">WRKY71</name>
    <name type="ordered locus">At1g29860</name>
    <name type="ORF">F1N18.10</name>
</gene>
<feature type="chain" id="PRO_0000133712" description="WRKY transcription factor 71">
    <location>
        <begin position="1"/>
        <end position="282"/>
    </location>
</feature>
<feature type="DNA-binding region" description="WRKY" evidence="2">
    <location>
        <begin position="130"/>
        <end position="195"/>
    </location>
</feature>
<feature type="region of interest" description="Disordered" evidence="3">
    <location>
        <begin position="63"/>
        <end position="121"/>
    </location>
</feature>
<feature type="compositionally biased region" description="Low complexity" evidence="3">
    <location>
        <begin position="65"/>
        <end position="75"/>
    </location>
</feature>
<feature type="compositionally biased region" description="Basic and acidic residues" evidence="3">
    <location>
        <begin position="77"/>
        <end position="99"/>
    </location>
</feature>
<sequence length="282" mass="31955">MDDHVEHNYNTSLEEVHFKSLSDCLQSSLVMDYNSLEKVFKFSPYSSPFQSVSPSVNNPYLNLTSNSPVVSSSSNEGEPKENTNDKSDQMEDNEGDLHGVGESSKQLTKQGKKKGEKKEREVRVAFMTKSEIDHLEDGYRWRKYGQKAVKNSPYPRSYYRCTTQKCNVKKRVERSFQDPSIVITTYEGKHNHPIPSTLRGTVAAEHLLVHRGGGGSLLHSFPRHHQDFLMMKHSPANYQSVGSLSYEHGHGTSSYNFNNNQPVVDYGLLQDIVPSMFSKNES</sequence>
<reference key="1">
    <citation type="submission" date="2001-09" db="EMBL/GenBank/DDBJ databases">
        <title>Arabidopsis thaliana transcription factor WRKY71.</title>
        <authorList>
            <person name="Ulker B."/>
            <person name="Kushnir S."/>
            <person name="Somssich I.E."/>
        </authorList>
    </citation>
    <scope>NUCLEOTIDE SEQUENCE [MRNA]</scope>
    <source>
        <strain>cv. Columbia</strain>
        <tissue>Flower</tissue>
    </source>
</reference>
<reference key="2">
    <citation type="journal article" date="2000" name="Nature">
        <title>Sequence and analysis of chromosome 1 of the plant Arabidopsis thaliana.</title>
        <authorList>
            <person name="Theologis A."/>
            <person name="Ecker J.R."/>
            <person name="Palm C.J."/>
            <person name="Federspiel N.A."/>
            <person name="Kaul S."/>
            <person name="White O."/>
            <person name="Alonso J."/>
            <person name="Altafi H."/>
            <person name="Araujo R."/>
            <person name="Bowman C.L."/>
            <person name="Brooks S.Y."/>
            <person name="Buehler E."/>
            <person name="Chan A."/>
            <person name="Chao Q."/>
            <person name="Chen H."/>
            <person name="Cheuk R.F."/>
            <person name="Chin C.W."/>
            <person name="Chung M.K."/>
            <person name="Conn L."/>
            <person name="Conway A.B."/>
            <person name="Conway A.R."/>
            <person name="Creasy T.H."/>
            <person name="Dewar K."/>
            <person name="Dunn P."/>
            <person name="Etgu P."/>
            <person name="Feldblyum T.V."/>
            <person name="Feng J.-D."/>
            <person name="Fong B."/>
            <person name="Fujii C.Y."/>
            <person name="Gill J.E."/>
            <person name="Goldsmith A.D."/>
            <person name="Haas B."/>
            <person name="Hansen N.F."/>
            <person name="Hughes B."/>
            <person name="Huizar L."/>
            <person name="Hunter J.L."/>
            <person name="Jenkins J."/>
            <person name="Johnson-Hopson C."/>
            <person name="Khan S."/>
            <person name="Khaykin E."/>
            <person name="Kim C.J."/>
            <person name="Koo H.L."/>
            <person name="Kremenetskaia I."/>
            <person name="Kurtz D.B."/>
            <person name="Kwan A."/>
            <person name="Lam B."/>
            <person name="Langin-Hooper S."/>
            <person name="Lee A."/>
            <person name="Lee J.M."/>
            <person name="Lenz C.A."/>
            <person name="Li J.H."/>
            <person name="Li Y.-P."/>
            <person name="Lin X."/>
            <person name="Liu S.X."/>
            <person name="Liu Z.A."/>
            <person name="Luros J.S."/>
            <person name="Maiti R."/>
            <person name="Marziali A."/>
            <person name="Militscher J."/>
            <person name="Miranda M."/>
            <person name="Nguyen M."/>
            <person name="Nierman W.C."/>
            <person name="Osborne B.I."/>
            <person name="Pai G."/>
            <person name="Peterson J."/>
            <person name="Pham P.K."/>
            <person name="Rizzo M."/>
            <person name="Rooney T."/>
            <person name="Rowley D."/>
            <person name="Sakano H."/>
            <person name="Salzberg S.L."/>
            <person name="Schwartz J.R."/>
            <person name="Shinn P."/>
            <person name="Southwick A.M."/>
            <person name="Sun H."/>
            <person name="Tallon L.J."/>
            <person name="Tambunga G."/>
            <person name="Toriumi M.J."/>
            <person name="Town C.D."/>
            <person name="Utterback T."/>
            <person name="Van Aken S."/>
            <person name="Vaysberg M."/>
            <person name="Vysotskaia V.S."/>
            <person name="Walker M."/>
            <person name="Wu D."/>
            <person name="Yu G."/>
            <person name="Fraser C.M."/>
            <person name="Venter J.C."/>
            <person name="Davis R.W."/>
        </authorList>
    </citation>
    <scope>NUCLEOTIDE SEQUENCE [LARGE SCALE GENOMIC DNA]</scope>
    <source>
        <strain>cv. Columbia</strain>
    </source>
</reference>
<reference key="3">
    <citation type="journal article" date="2017" name="Plant J.">
        <title>Araport11: a complete reannotation of the Arabidopsis thaliana reference genome.</title>
        <authorList>
            <person name="Cheng C.Y."/>
            <person name="Krishnakumar V."/>
            <person name="Chan A.P."/>
            <person name="Thibaud-Nissen F."/>
            <person name="Schobel S."/>
            <person name="Town C.D."/>
        </authorList>
    </citation>
    <scope>GENOME REANNOTATION</scope>
    <source>
        <strain>cv. Columbia</strain>
    </source>
</reference>
<comment type="function">
    <text evidence="1">Transcription factor. Interacts specifically with the W box (5'-(T)TGAC[CT]-3'), a frequently occurring elicitor-responsive cis-acting element (By similarity).</text>
</comment>
<comment type="subcellular location">
    <subcellularLocation>
        <location evidence="4">Nucleus</location>
    </subcellularLocation>
</comment>
<comment type="similarity">
    <text evidence="4">Belongs to the WRKY group II-c family.</text>
</comment>
<comment type="sequence caution" evidence="4">
    <conflict type="erroneous initiation">
        <sequence resource="EMBL-CDS" id="AAG10610"/>
    </conflict>
</comment>
<dbReference type="EMBL" id="AF421158">
    <property type="protein sequence ID" value="AAL13047.1"/>
    <property type="molecule type" value="mRNA"/>
</dbReference>
<dbReference type="EMBL" id="AC008030">
    <property type="protein sequence ID" value="AAG10610.1"/>
    <property type="status" value="ALT_INIT"/>
    <property type="molecule type" value="Genomic_DNA"/>
</dbReference>
<dbReference type="EMBL" id="CP002684">
    <property type="protein sequence ID" value="AEE31143.1"/>
    <property type="molecule type" value="Genomic_DNA"/>
</dbReference>
<dbReference type="PIR" id="B86422">
    <property type="entry name" value="B86422"/>
</dbReference>
<dbReference type="RefSeq" id="NP_174279.1">
    <property type="nucleotide sequence ID" value="NM_102726.3"/>
</dbReference>
<dbReference type="SMR" id="Q93WV4"/>
<dbReference type="STRING" id="3702.Q93WV4"/>
<dbReference type="PaxDb" id="3702-AT1G29860.1"/>
<dbReference type="ProteomicsDB" id="246480"/>
<dbReference type="EnsemblPlants" id="AT1G29860.1">
    <property type="protein sequence ID" value="AT1G29860.1"/>
    <property type="gene ID" value="AT1G29860"/>
</dbReference>
<dbReference type="GeneID" id="839864"/>
<dbReference type="Gramene" id="AT1G29860.1">
    <property type="protein sequence ID" value="AT1G29860.1"/>
    <property type="gene ID" value="AT1G29860"/>
</dbReference>
<dbReference type="KEGG" id="ath:AT1G29860"/>
<dbReference type="Araport" id="AT1G29860"/>
<dbReference type="TAIR" id="AT1G29860">
    <property type="gene designation" value="WRKY71"/>
</dbReference>
<dbReference type="eggNOG" id="ENOG502QQYS">
    <property type="taxonomic scope" value="Eukaryota"/>
</dbReference>
<dbReference type="HOGENOM" id="CLU_033779_2_0_1"/>
<dbReference type="InParanoid" id="Q93WV4"/>
<dbReference type="OMA" id="SMFLKHE"/>
<dbReference type="PhylomeDB" id="Q93WV4"/>
<dbReference type="PRO" id="PR:Q93WV4"/>
<dbReference type="Proteomes" id="UP000006548">
    <property type="component" value="Chromosome 1"/>
</dbReference>
<dbReference type="ExpressionAtlas" id="Q93WV4">
    <property type="expression patterns" value="baseline and differential"/>
</dbReference>
<dbReference type="GO" id="GO:0005634">
    <property type="term" value="C:nucleus"/>
    <property type="evidence" value="ECO:0000314"/>
    <property type="project" value="TAIR"/>
</dbReference>
<dbReference type="GO" id="GO:0003700">
    <property type="term" value="F:DNA-binding transcription factor activity"/>
    <property type="evidence" value="ECO:0000250"/>
    <property type="project" value="TAIR"/>
</dbReference>
<dbReference type="GO" id="GO:1990837">
    <property type="term" value="F:sequence-specific double-stranded DNA binding"/>
    <property type="evidence" value="ECO:0000314"/>
    <property type="project" value="TAIR"/>
</dbReference>
<dbReference type="GO" id="GO:0045893">
    <property type="term" value="P:positive regulation of DNA-templated transcription"/>
    <property type="evidence" value="ECO:0000314"/>
    <property type="project" value="TAIR"/>
</dbReference>
<dbReference type="GO" id="GO:0010228">
    <property type="term" value="P:vegetative to reproductive phase transition of meristem"/>
    <property type="evidence" value="ECO:0000315"/>
    <property type="project" value="TAIR"/>
</dbReference>
<dbReference type="FunFam" id="2.20.25.80:FF:000003">
    <property type="entry name" value="WRKY transcription factor 57"/>
    <property type="match status" value="1"/>
</dbReference>
<dbReference type="Gene3D" id="2.20.25.80">
    <property type="entry name" value="WRKY domain"/>
    <property type="match status" value="1"/>
</dbReference>
<dbReference type="InterPro" id="IPR017396">
    <property type="entry name" value="TF_WRKY_IIc"/>
</dbReference>
<dbReference type="InterPro" id="IPR003657">
    <property type="entry name" value="WRKY_dom"/>
</dbReference>
<dbReference type="InterPro" id="IPR036576">
    <property type="entry name" value="WRKY_dom_sf"/>
</dbReference>
<dbReference type="InterPro" id="IPR044810">
    <property type="entry name" value="WRKY_plant"/>
</dbReference>
<dbReference type="PANTHER" id="PTHR31221:SF358">
    <property type="entry name" value="WRKY TRANSCRIPTION FACTOR 71"/>
    <property type="match status" value="1"/>
</dbReference>
<dbReference type="PANTHER" id="PTHR31221">
    <property type="entry name" value="WRKY TRANSCRIPTION FACTOR PROTEIN 1-RELATED"/>
    <property type="match status" value="1"/>
</dbReference>
<dbReference type="Pfam" id="PF03106">
    <property type="entry name" value="WRKY"/>
    <property type="match status" value="1"/>
</dbReference>
<dbReference type="PIRSF" id="PIRSF038130">
    <property type="entry name" value="TF_WRKY_IIc"/>
    <property type="match status" value="1"/>
</dbReference>
<dbReference type="SMART" id="SM00774">
    <property type="entry name" value="WRKY"/>
    <property type="match status" value="1"/>
</dbReference>
<dbReference type="SUPFAM" id="SSF118290">
    <property type="entry name" value="WRKY DNA-binding domain"/>
    <property type="match status" value="1"/>
</dbReference>
<dbReference type="PROSITE" id="PS50811">
    <property type="entry name" value="WRKY"/>
    <property type="match status" value="1"/>
</dbReference>
<proteinExistence type="evidence at transcript level"/>
<organism>
    <name type="scientific">Arabidopsis thaliana</name>
    <name type="common">Mouse-ear cress</name>
    <dbReference type="NCBI Taxonomy" id="3702"/>
    <lineage>
        <taxon>Eukaryota</taxon>
        <taxon>Viridiplantae</taxon>
        <taxon>Streptophyta</taxon>
        <taxon>Embryophyta</taxon>
        <taxon>Tracheophyta</taxon>
        <taxon>Spermatophyta</taxon>
        <taxon>Magnoliopsida</taxon>
        <taxon>eudicotyledons</taxon>
        <taxon>Gunneridae</taxon>
        <taxon>Pentapetalae</taxon>
        <taxon>rosids</taxon>
        <taxon>malvids</taxon>
        <taxon>Brassicales</taxon>
        <taxon>Brassicaceae</taxon>
        <taxon>Camelineae</taxon>
        <taxon>Arabidopsis</taxon>
    </lineage>
</organism>